<proteinExistence type="inferred from homology"/>
<name>LLDD_ECO81</name>
<sequence>MIISAASDYRAAAQRILPPFLFHYMDGGAYSEYTLRRNVEDLSEVALRQRILKNMSDLSLETTLFNEKLSMPVALGPVGLCGMYARRGEVQAAKAADAHGIPFTLSTVSVCPIEEVAPAIKRPMWFQLYVLRDRGFMRNALERAKAAGCSTLVFTVDMPTPGARYRDAHSGMSGPNAAMRRYLQAVTHPQWAWDVGLNGRPHDLGNISAYLGKPTGLEDYIGWLGNNFDPSISWKDLEWIRDFWDGPMVIKGILDPEDARDAVRFGADGIVVSNHGGRQLDGVLSSARALPAIADAVKGDIAILADSGIRNGLDVVRMIALGADTILLGRAFLYALATAGQAGVANLLNLIEKEMKVAMTLTGAKSISEITQDSLVQGLGKELPAALAPMAKGNAA</sequence>
<dbReference type="EC" id="1.1.-.-" evidence="1"/>
<dbReference type="EMBL" id="CU928162">
    <property type="protein sequence ID" value="CAR10422.2"/>
    <property type="molecule type" value="Genomic_DNA"/>
</dbReference>
<dbReference type="RefSeq" id="WP_000586971.1">
    <property type="nucleotide sequence ID" value="NC_011745.1"/>
</dbReference>
<dbReference type="SMR" id="B7N251"/>
<dbReference type="KEGG" id="ecq:ECED1_4291"/>
<dbReference type="HOGENOM" id="CLU_020639_0_0_6"/>
<dbReference type="Proteomes" id="UP000000748">
    <property type="component" value="Chromosome"/>
</dbReference>
<dbReference type="GO" id="GO:0005886">
    <property type="term" value="C:plasma membrane"/>
    <property type="evidence" value="ECO:0007669"/>
    <property type="project" value="UniProtKB-SubCell"/>
</dbReference>
<dbReference type="GO" id="GO:0010181">
    <property type="term" value="F:FMN binding"/>
    <property type="evidence" value="ECO:0007669"/>
    <property type="project" value="InterPro"/>
</dbReference>
<dbReference type="GO" id="GO:0004459">
    <property type="term" value="F:L-lactate dehydrogenase activity"/>
    <property type="evidence" value="ECO:0007669"/>
    <property type="project" value="UniProtKB-UniRule"/>
</dbReference>
<dbReference type="GO" id="GO:0009060">
    <property type="term" value="P:aerobic respiration"/>
    <property type="evidence" value="ECO:0007669"/>
    <property type="project" value="TreeGrafter"/>
</dbReference>
<dbReference type="GO" id="GO:0006089">
    <property type="term" value="P:lactate metabolic process"/>
    <property type="evidence" value="ECO:0007669"/>
    <property type="project" value="UniProtKB-UniRule"/>
</dbReference>
<dbReference type="CDD" id="cd02809">
    <property type="entry name" value="alpha_hydroxyacid_oxid_FMN"/>
    <property type="match status" value="1"/>
</dbReference>
<dbReference type="FunFam" id="3.20.20.70:FF:000029">
    <property type="entry name" value="L-lactate dehydrogenase"/>
    <property type="match status" value="1"/>
</dbReference>
<dbReference type="Gene3D" id="3.20.20.70">
    <property type="entry name" value="Aldolase class I"/>
    <property type="match status" value="1"/>
</dbReference>
<dbReference type="HAMAP" id="MF_01559">
    <property type="entry name" value="L_lact_dehydr"/>
    <property type="match status" value="1"/>
</dbReference>
<dbReference type="InterPro" id="IPR013785">
    <property type="entry name" value="Aldolase_TIM"/>
</dbReference>
<dbReference type="InterPro" id="IPR012133">
    <property type="entry name" value="Alpha-hydoxy_acid_DH_FMN"/>
</dbReference>
<dbReference type="InterPro" id="IPR000262">
    <property type="entry name" value="FMN-dep_DH"/>
</dbReference>
<dbReference type="InterPro" id="IPR037396">
    <property type="entry name" value="FMN_HAD"/>
</dbReference>
<dbReference type="InterPro" id="IPR008259">
    <property type="entry name" value="FMN_hydac_DH_AS"/>
</dbReference>
<dbReference type="InterPro" id="IPR020920">
    <property type="entry name" value="LldD"/>
</dbReference>
<dbReference type="NCBIfam" id="NF033901">
    <property type="entry name" value="L_lactate_LldD"/>
    <property type="match status" value="1"/>
</dbReference>
<dbReference type="NCBIfam" id="NF008398">
    <property type="entry name" value="PRK11197.1"/>
    <property type="match status" value="1"/>
</dbReference>
<dbReference type="PANTHER" id="PTHR10578:SF85">
    <property type="entry name" value="L-LACTATE DEHYDROGENASE"/>
    <property type="match status" value="1"/>
</dbReference>
<dbReference type="PANTHER" id="PTHR10578">
    <property type="entry name" value="S -2-HYDROXY-ACID OXIDASE-RELATED"/>
    <property type="match status" value="1"/>
</dbReference>
<dbReference type="Pfam" id="PF01070">
    <property type="entry name" value="FMN_dh"/>
    <property type="match status" value="1"/>
</dbReference>
<dbReference type="PIRSF" id="PIRSF000138">
    <property type="entry name" value="Al-hdrx_acd_dh"/>
    <property type="match status" value="1"/>
</dbReference>
<dbReference type="SUPFAM" id="SSF51395">
    <property type="entry name" value="FMN-linked oxidoreductases"/>
    <property type="match status" value="1"/>
</dbReference>
<dbReference type="PROSITE" id="PS00557">
    <property type="entry name" value="FMN_HYDROXY_ACID_DH_1"/>
    <property type="match status" value="1"/>
</dbReference>
<dbReference type="PROSITE" id="PS51349">
    <property type="entry name" value="FMN_HYDROXY_ACID_DH_2"/>
    <property type="match status" value="1"/>
</dbReference>
<feature type="chain" id="PRO_0000383430" description="L-lactate dehydrogenase">
    <location>
        <begin position="1"/>
        <end position="396"/>
    </location>
</feature>
<feature type="domain" description="FMN hydroxy acid dehydrogenase" evidence="1">
    <location>
        <begin position="1"/>
        <end position="380"/>
    </location>
</feature>
<feature type="active site" description="Proton acceptor" evidence="1">
    <location>
        <position position="275"/>
    </location>
</feature>
<feature type="binding site" evidence="1">
    <location>
        <position position="24"/>
    </location>
    <ligand>
        <name>substrate</name>
    </ligand>
</feature>
<feature type="binding site" evidence="1">
    <location>
        <position position="106"/>
    </location>
    <ligand>
        <name>FMN</name>
        <dbReference type="ChEBI" id="CHEBI:58210"/>
    </ligand>
</feature>
<feature type="binding site" evidence="1">
    <location>
        <position position="127"/>
    </location>
    <ligand>
        <name>FMN</name>
        <dbReference type="ChEBI" id="CHEBI:58210"/>
    </ligand>
</feature>
<feature type="binding site" evidence="1">
    <location>
        <position position="129"/>
    </location>
    <ligand>
        <name>substrate</name>
    </ligand>
</feature>
<feature type="binding site" evidence="1">
    <location>
        <position position="155"/>
    </location>
    <ligand>
        <name>FMN</name>
        <dbReference type="ChEBI" id="CHEBI:58210"/>
    </ligand>
</feature>
<feature type="binding site" evidence="1">
    <location>
        <position position="164"/>
    </location>
    <ligand>
        <name>substrate</name>
    </ligand>
</feature>
<feature type="binding site" evidence="1">
    <location>
        <position position="251"/>
    </location>
    <ligand>
        <name>FMN</name>
        <dbReference type="ChEBI" id="CHEBI:58210"/>
    </ligand>
</feature>
<feature type="binding site" evidence="1">
    <location>
        <position position="278"/>
    </location>
    <ligand>
        <name>substrate</name>
    </ligand>
</feature>
<feature type="binding site" evidence="1">
    <location>
        <begin position="306"/>
        <end position="330"/>
    </location>
    <ligand>
        <name>FMN</name>
        <dbReference type="ChEBI" id="CHEBI:58210"/>
    </ligand>
</feature>
<accession>B7N251</accession>
<evidence type="ECO:0000255" key="1">
    <source>
        <dbReference type="HAMAP-Rule" id="MF_01559"/>
    </source>
</evidence>
<protein>
    <recommendedName>
        <fullName evidence="1">L-lactate dehydrogenase</fullName>
        <ecNumber evidence="1">1.1.-.-</ecNumber>
    </recommendedName>
</protein>
<comment type="function">
    <text evidence="1">Catalyzes the conversion of L-lactate to pyruvate. Is coupled to the respiratory chain.</text>
</comment>
<comment type="catalytic activity">
    <reaction evidence="1">
        <text>(S)-lactate + A = pyruvate + AH2</text>
        <dbReference type="Rhea" id="RHEA:45816"/>
        <dbReference type="ChEBI" id="CHEBI:13193"/>
        <dbReference type="ChEBI" id="CHEBI:15361"/>
        <dbReference type="ChEBI" id="CHEBI:16651"/>
        <dbReference type="ChEBI" id="CHEBI:17499"/>
    </reaction>
</comment>
<comment type="cofactor">
    <cofactor evidence="1">
        <name>FMN</name>
        <dbReference type="ChEBI" id="CHEBI:58210"/>
    </cofactor>
</comment>
<comment type="subcellular location">
    <subcellularLocation>
        <location evidence="1">Cell inner membrane</location>
        <topology evidence="1">Peripheral membrane protein</topology>
    </subcellularLocation>
</comment>
<comment type="similarity">
    <text evidence="1">Belongs to the FMN-dependent alpha-hydroxy acid dehydrogenase family.</text>
</comment>
<reference key="1">
    <citation type="journal article" date="2009" name="PLoS Genet.">
        <title>Organised genome dynamics in the Escherichia coli species results in highly diverse adaptive paths.</title>
        <authorList>
            <person name="Touchon M."/>
            <person name="Hoede C."/>
            <person name="Tenaillon O."/>
            <person name="Barbe V."/>
            <person name="Baeriswyl S."/>
            <person name="Bidet P."/>
            <person name="Bingen E."/>
            <person name="Bonacorsi S."/>
            <person name="Bouchier C."/>
            <person name="Bouvet O."/>
            <person name="Calteau A."/>
            <person name="Chiapello H."/>
            <person name="Clermont O."/>
            <person name="Cruveiller S."/>
            <person name="Danchin A."/>
            <person name="Diard M."/>
            <person name="Dossat C."/>
            <person name="Karoui M.E."/>
            <person name="Frapy E."/>
            <person name="Garry L."/>
            <person name="Ghigo J.M."/>
            <person name="Gilles A.M."/>
            <person name="Johnson J."/>
            <person name="Le Bouguenec C."/>
            <person name="Lescat M."/>
            <person name="Mangenot S."/>
            <person name="Martinez-Jehanne V."/>
            <person name="Matic I."/>
            <person name="Nassif X."/>
            <person name="Oztas S."/>
            <person name="Petit M.A."/>
            <person name="Pichon C."/>
            <person name="Rouy Z."/>
            <person name="Ruf C.S."/>
            <person name="Schneider D."/>
            <person name="Tourret J."/>
            <person name="Vacherie B."/>
            <person name="Vallenet D."/>
            <person name="Medigue C."/>
            <person name="Rocha E.P.C."/>
            <person name="Denamur E."/>
        </authorList>
    </citation>
    <scope>NUCLEOTIDE SEQUENCE [LARGE SCALE GENOMIC DNA]</scope>
    <source>
        <strain>ED1a</strain>
    </source>
</reference>
<keyword id="KW-0997">Cell inner membrane</keyword>
<keyword id="KW-1003">Cell membrane</keyword>
<keyword id="KW-0285">Flavoprotein</keyword>
<keyword id="KW-0288">FMN</keyword>
<keyword id="KW-0472">Membrane</keyword>
<keyword id="KW-0560">Oxidoreductase</keyword>
<gene>
    <name evidence="1" type="primary">lldD</name>
    <name type="ordered locus">ECED1_4291</name>
</gene>
<organism>
    <name type="scientific">Escherichia coli O81 (strain ED1a)</name>
    <dbReference type="NCBI Taxonomy" id="585397"/>
    <lineage>
        <taxon>Bacteria</taxon>
        <taxon>Pseudomonadati</taxon>
        <taxon>Pseudomonadota</taxon>
        <taxon>Gammaproteobacteria</taxon>
        <taxon>Enterobacterales</taxon>
        <taxon>Enterobacteriaceae</taxon>
        <taxon>Escherichia</taxon>
    </lineage>
</organism>